<reference key="1">
    <citation type="journal article" date="1993" name="Plant J.">
        <title>Expression of myb-related genes in the moss, Physcomitrella patens.</title>
        <authorList>
            <person name="Leech M.J."/>
            <person name="Kammerer W."/>
            <person name="Cove D.J."/>
            <person name="Martin C."/>
            <person name="Wang T.L."/>
        </authorList>
    </citation>
    <scope>NUCLEOTIDE SEQUENCE [MRNA]</scope>
</reference>
<reference key="2">
    <citation type="journal article" date="2008" name="Science">
        <title>The Physcomitrella genome reveals evolutionary insights into the conquest of land by plants.</title>
        <authorList>
            <person name="Rensing S.A."/>
            <person name="Lang D."/>
            <person name="Zimmer A.D."/>
            <person name="Terry A."/>
            <person name="Salamov A."/>
            <person name="Shapiro H."/>
            <person name="Nishiyama T."/>
            <person name="Perroud P.-F."/>
            <person name="Lindquist E.A."/>
            <person name="Kamisugi Y."/>
            <person name="Tanahashi T."/>
            <person name="Sakakibara K."/>
            <person name="Fujita T."/>
            <person name="Oishi K."/>
            <person name="Shin-I T."/>
            <person name="Kuroki Y."/>
            <person name="Toyoda A."/>
            <person name="Suzuki Y."/>
            <person name="Hashimoto S.-I."/>
            <person name="Yamaguchi K."/>
            <person name="Sugano S."/>
            <person name="Kohara Y."/>
            <person name="Fujiyama A."/>
            <person name="Anterola A."/>
            <person name="Aoki S."/>
            <person name="Ashton N."/>
            <person name="Barbazuk W.B."/>
            <person name="Barker E."/>
            <person name="Bennetzen J.L."/>
            <person name="Blankenship R."/>
            <person name="Cho S.H."/>
            <person name="Dutcher S.K."/>
            <person name="Estelle M."/>
            <person name="Fawcett J.A."/>
            <person name="Gundlach H."/>
            <person name="Hanada K."/>
            <person name="Heyl A."/>
            <person name="Hicks K.A."/>
            <person name="Hughes J."/>
            <person name="Lohr M."/>
            <person name="Mayer K."/>
            <person name="Melkozernov A."/>
            <person name="Murata T."/>
            <person name="Nelson D.R."/>
            <person name="Pils B."/>
            <person name="Prigge M."/>
            <person name="Reiss B."/>
            <person name="Renner T."/>
            <person name="Rombauts S."/>
            <person name="Rushton P.J."/>
            <person name="Sanderfoot A."/>
            <person name="Schween G."/>
            <person name="Shiu S.-H."/>
            <person name="Stueber K."/>
            <person name="Theodoulou F.L."/>
            <person name="Tu H."/>
            <person name="Van de Peer Y."/>
            <person name="Verrier P.J."/>
            <person name="Waters E."/>
            <person name="Wood A."/>
            <person name="Yang L."/>
            <person name="Cove D."/>
            <person name="Cuming A.C."/>
            <person name="Hasebe M."/>
            <person name="Lucas S."/>
            <person name="Mishler B.D."/>
            <person name="Reski R."/>
            <person name="Grigoriev I.V."/>
            <person name="Quatrano R.S."/>
            <person name="Boore J.L."/>
        </authorList>
    </citation>
    <scope>NUCLEOTIDE SEQUENCE [LARGE SCALE GENOMIC DNA]</scope>
    <source>
        <strain>cv. Gransden 2004</strain>
    </source>
</reference>
<organism>
    <name type="scientific">Physcomitrium patens</name>
    <name type="common">Spreading-leaved earth moss</name>
    <name type="synonym">Physcomitrella patens</name>
    <dbReference type="NCBI Taxonomy" id="3218"/>
    <lineage>
        <taxon>Eukaryota</taxon>
        <taxon>Viridiplantae</taxon>
        <taxon>Streptophyta</taxon>
        <taxon>Embryophyta</taxon>
        <taxon>Bryophyta</taxon>
        <taxon>Bryophytina</taxon>
        <taxon>Bryopsida</taxon>
        <taxon>Funariidae</taxon>
        <taxon>Funariales</taxon>
        <taxon>Funariaceae</taxon>
        <taxon>Physcomitrium</taxon>
    </lineage>
</organism>
<proteinExistence type="evidence at transcript level"/>
<gene>
    <name type="primary">PP2</name>
    <name type="ORF">PHYPADRAFT_100368</name>
</gene>
<name>MYB2_PHYPA</name>
<comment type="function">
    <text>Possible transcription activator.</text>
</comment>
<comment type="subcellular location">
    <subcellularLocation>
        <location evidence="1">Nucleus</location>
    </subcellularLocation>
</comment>
<comment type="developmental stage">
    <text>High rates of growth.</text>
</comment>
<protein>
    <recommendedName>
        <fullName>Myb-related protein Pp2</fullName>
    </recommendedName>
</protein>
<keyword id="KW-0010">Activator</keyword>
<keyword id="KW-0238">DNA-binding</keyword>
<keyword id="KW-0539">Nucleus</keyword>
<keyword id="KW-1185">Reference proteome</keyword>
<keyword id="KW-0677">Repeat</keyword>
<keyword id="KW-0804">Transcription</keyword>
<keyword id="KW-0805">Transcription regulation</keyword>
<sequence>MGRKPCCEKVGLRRGPWTSEEDQKLVSHITNNGLSCWRAIPKLAGLLRCGKSCRLRWTNYLRPDLKRGIFSEAEENLILDLHATLGNRWSRIAAQLPGRTDNEIKNYWNTRLKKRLRSQGLDPNTHLPLEDSKLDDTEDDTDDEGGDSSDVTMSDASKSEKRSKKKSKPKETVKVRQPKGPKPAPQLKMCQSDEGPVLLKVPKAPKSPISVNPGPGCNYDDDSEHSSSSTVTTKSHEDHRDSSDFIKALTSVSSFPEAELWSCIKPITNSFSSTALLSEWDSYRAFDSSLFPSSYPQLNSGLPKLEDVNSKSSAVASPVQGMLPAYNPMGMEMQTRMQFSSQLTHEIGQNYGGIFQETCYPQPDMGMSWSMHAELSHCGTESLFATPNPANAPSNFEEVPQPSPCTTSQELQRLAALLDLI</sequence>
<accession>P80073</accession>
<accession>A9U1I8</accession>
<dbReference type="EMBL" id="X67050">
    <property type="protein sequence ID" value="CAA47435.1"/>
    <property type="molecule type" value="mRNA"/>
</dbReference>
<dbReference type="EMBL" id="DS545304">
    <property type="protein sequence ID" value="EDQ50457.1"/>
    <property type="molecule type" value="Genomic_DNA"/>
</dbReference>
<dbReference type="PIR" id="S24244">
    <property type="entry name" value="S24244"/>
</dbReference>
<dbReference type="RefSeq" id="XP_001784732.1">
    <property type="nucleotide sequence ID" value="XM_001784680.1"/>
</dbReference>
<dbReference type="SMR" id="P80073"/>
<dbReference type="PaxDb" id="3218-PP1S420_4V6.1"/>
<dbReference type="EnsemblPlants" id="Pp3c15_15960V3.1">
    <property type="protein sequence ID" value="Pp3c15_15960V3.1"/>
    <property type="gene ID" value="Pp3c15_15960"/>
</dbReference>
<dbReference type="EnsemblPlants" id="Pp3c15_15960V3.2">
    <property type="protein sequence ID" value="Pp3c15_15960V3.2"/>
    <property type="gene ID" value="Pp3c15_15960"/>
</dbReference>
<dbReference type="EnsemblPlants" id="Pp3c15_15960V3.3">
    <property type="protein sequence ID" value="Pp3c15_15960V3.3"/>
    <property type="gene ID" value="Pp3c15_15960"/>
</dbReference>
<dbReference type="EnsemblPlants" id="Pp3c15_15960V3.4">
    <property type="protein sequence ID" value="Pp3c15_15960V3.4"/>
    <property type="gene ID" value="Pp3c15_15960"/>
</dbReference>
<dbReference type="EnsemblPlants" id="Pp3c15_15960V3.5">
    <property type="protein sequence ID" value="Pp3c15_15960V3.5"/>
    <property type="gene ID" value="Pp3c15_15960"/>
</dbReference>
<dbReference type="Gramene" id="Pp3c15_15960V3.1">
    <property type="protein sequence ID" value="Pp3c15_15960V3.1"/>
    <property type="gene ID" value="Pp3c15_15960"/>
</dbReference>
<dbReference type="Gramene" id="Pp3c15_15960V3.2">
    <property type="protein sequence ID" value="Pp3c15_15960V3.2"/>
    <property type="gene ID" value="Pp3c15_15960"/>
</dbReference>
<dbReference type="Gramene" id="Pp3c15_15960V3.3">
    <property type="protein sequence ID" value="Pp3c15_15960V3.3"/>
    <property type="gene ID" value="Pp3c15_15960"/>
</dbReference>
<dbReference type="Gramene" id="Pp3c15_15960V3.4">
    <property type="protein sequence ID" value="Pp3c15_15960V3.4"/>
    <property type="gene ID" value="Pp3c15_15960"/>
</dbReference>
<dbReference type="Gramene" id="Pp3c15_15960V3.5">
    <property type="protein sequence ID" value="Pp3c15_15960V3.5"/>
    <property type="gene ID" value="Pp3c15_15960"/>
</dbReference>
<dbReference type="eggNOG" id="KOG0048">
    <property type="taxonomic scope" value="Eukaryota"/>
</dbReference>
<dbReference type="HOGENOM" id="CLU_028567_16_6_1"/>
<dbReference type="InParanoid" id="P80073"/>
<dbReference type="OrthoDB" id="2143914at2759"/>
<dbReference type="Proteomes" id="UP000006727">
    <property type="component" value="Chromosome 15"/>
</dbReference>
<dbReference type="GO" id="GO:0005634">
    <property type="term" value="C:nucleus"/>
    <property type="evidence" value="ECO:0000318"/>
    <property type="project" value="GO_Central"/>
</dbReference>
<dbReference type="GO" id="GO:0000987">
    <property type="term" value="F:cis-regulatory region sequence-specific DNA binding"/>
    <property type="evidence" value="ECO:0000318"/>
    <property type="project" value="GO_Central"/>
</dbReference>
<dbReference type="GO" id="GO:0006355">
    <property type="term" value="P:regulation of DNA-templated transcription"/>
    <property type="evidence" value="ECO:0000318"/>
    <property type="project" value="GO_Central"/>
</dbReference>
<dbReference type="CDD" id="cd00167">
    <property type="entry name" value="SANT"/>
    <property type="match status" value="2"/>
</dbReference>
<dbReference type="FunFam" id="1.10.10.60:FF:000878">
    <property type="match status" value="1"/>
</dbReference>
<dbReference type="FunFam" id="1.10.10.60:FF:000001">
    <property type="entry name" value="MYB-related transcription factor"/>
    <property type="match status" value="1"/>
</dbReference>
<dbReference type="Gene3D" id="1.10.10.60">
    <property type="entry name" value="Homeodomain-like"/>
    <property type="match status" value="2"/>
</dbReference>
<dbReference type="InterPro" id="IPR009057">
    <property type="entry name" value="Homeodomain-like_sf"/>
</dbReference>
<dbReference type="InterPro" id="IPR017930">
    <property type="entry name" value="Myb_dom"/>
</dbReference>
<dbReference type="InterPro" id="IPR015495">
    <property type="entry name" value="Myb_TF_plants"/>
</dbReference>
<dbReference type="InterPro" id="IPR001005">
    <property type="entry name" value="SANT/Myb"/>
</dbReference>
<dbReference type="PANTHER" id="PTHR47994">
    <property type="entry name" value="F14D16.11-RELATED"/>
    <property type="match status" value="1"/>
</dbReference>
<dbReference type="PANTHER" id="PTHR47994:SF5">
    <property type="entry name" value="F14D16.11-RELATED"/>
    <property type="match status" value="1"/>
</dbReference>
<dbReference type="Pfam" id="PF00249">
    <property type="entry name" value="Myb_DNA-binding"/>
    <property type="match status" value="2"/>
</dbReference>
<dbReference type="SMART" id="SM00717">
    <property type="entry name" value="SANT"/>
    <property type="match status" value="2"/>
</dbReference>
<dbReference type="SUPFAM" id="SSF46689">
    <property type="entry name" value="Homeodomain-like"/>
    <property type="match status" value="1"/>
</dbReference>
<dbReference type="PROSITE" id="PS51294">
    <property type="entry name" value="HTH_MYB"/>
    <property type="match status" value="2"/>
</dbReference>
<evidence type="ECO:0000255" key="1">
    <source>
        <dbReference type="PROSITE-ProRule" id="PRU00625"/>
    </source>
</evidence>
<evidence type="ECO:0000256" key="2">
    <source>
        <dbReference type="SAM" id="MobiDB-lite"/>
    </source>
</evidence>
<feature type="chain" id="PRO_0000197070" description="Myb-related protein Pp2">
    <location>
        <begin position="1"/>
        <end position="421"/>
    </location>
</feature>
<feature type="domain" description="HTH myb-type 1" evidence="1">
    <location>
        <begin position="9"/>
        <end position="61"/>
    </location>
</feature>
<feature type="domain" description="HTH myb-type 2" evidence="1">
    <location>
        <begin position="62"/>
        <end position="116"/>
    </location>
</feature>
<feature type="DNA-binding region" description="H-T-H motif" evidence="1">
    <location>
        <begin position="37"/>
        <end position="61"/>
    </location>
</feature>
<feature type="DNA-binding region" description="H-T-H motif" evidence="1">
    <location>
        <begin position="89"/>
        <end position="112"/>
    </location>
</feature>
<feature type="region of interest" description="Disordered" evidence="2">
    <location>
        <begin position="119"/>
        <end position="240"/>
    </location>
</feature>
<feature type="compositionally biased region" description="Acidic residues" evidence="2">
    <location>
        <begin position="136"/>
        <end position="147"/>
    </location>
</feature>